<accession>C4K2U3</accession>
<gene>
    <name evidence="1" type="primary">grpE</name>
    <name type="ordered locus">RPR_07320</name>
</gene>
<name>GRPE_RICPU</name>
<keyword id="KW-0143">Chaperone</keyword>
<keyword id="KW-0963">Cytoplasm</keyword>
<keyword id="KW-0346">Stress response</keyword>
<dbReference type="EMBL" id="CP001227">
    <property type="protein sequence ID" value="ACR47888.1"/>
    <property type="molecule type" value="Genomic_DNA"/>
</dbReference>
<dbReference type="RefSeq" id="WP_010977570.1">
    <property type="nucleotide sequence ID" value="NC_012730.1"/>
</dbReference>
<dbReference type="SMR" id="C4K2U3"/>
<dbReference type="GeneID" id="928113"/>
<dbReference type="KEGG" id="rpk:RPR_07320"/>
<dbReference type="HOGENOM" id="CLU_057217_6_2_5"/>
<dbReference type="Proteomes" id="UP000005015">
    <property type="component" value="Chromosome"/>
</dbReference>
<dbReference type="GO" id="GO:0005737">
    <property type="term" value="C:cytoplasm"/>
    <property type="evidence" value="ECO:0007669"/>
    <property type="project" value="UniProtKB-SubCell"/>
</dbReference>
<dbReference type="GO" id="GO:0000774">
    <property type="term" value="F:adenyl-nucleotide exchange factor activity"/>
    <property type="evidence" value="ECO:0007669"/>
    <property type="project" value="InterPro"/>
</dbReference>
<dbReference type="GO" id="GO:0042803">
    <property type="term" value="F:protein homodimerization activity"/>
    <property type="evidence" value="ECO:0007669"/>
    <property type="project" value="InterPro"/>
</dbReference>
<dbReference type="GO" id="GO:0051087">
    <property type="term" value="F:protein-folding chaperone binding"/>
    <property type="evidence" value="ECO:0007669"/>
    <property type="project" value="InterPro"/>
</dbReference>
<dbReference type="GO" id="GO:0051082">
    <property type="term" value="F:unfolded protein binding"/>
    <property type="evidence" value="ECO:0007669"/>
    <property type="project" value="TreeGrafter"/>
</dbReference>
<dbReference type="GO" id="GO:0006457">
    <property type="term" value="P:protein folding"/>
    <property type="evidence" value="ECO:0007669"/>
    <property type="project" value="InterPro"/>
</dbReference>
<dbReference type="GO" id="GO:0030150">
    <property type="term" value="P:protein import into mitochondrial matrix"/>
    <property type="evidence" value="ECO:0007669"/>
    <property type="project" value="TreeGrafter"/>
</dbReference>
<dbReference type="CDD" id="cd00446">
    <property type="entry name" value="GrpE"/>
    <property type="match status" value="1"/>
</dbReference>
<dbReference type="FunFam" id="2.30.22.10:FF:000001">
    <property type="entry name" value="Protein GrpE"/>
    <property type="match status" value="1"/>
</dbReference>
<dbReference type="FunFam" id="3.90.20.20:FF:000016">
    <property type="entry name" value="Protein GrpE"/>
    <property type="match status" value="1"/>
</dbReference>
<dbReference type="Gene3D" id="3.90.20.20">
    <property type="match status" value="1"/>
</dbReference>
<dbReference type="Gene3D" id="2.30.22.10">
    <property type="entry name" value="Head domain of nucleotide exchange factor GrpE"/>
    <property type="match status" value="1"/>
</dbReference>
<dbReference type="HAMAP" id="MF_01151">
    <property type="entry name" value="GrpE"/>
    <property type="match status" value="1"/>
</dbReference>
<dbReference type="InterPro" id="IPR000740">
    <property type="entry name" value="GrpE"/>
</dbReference>
<dbReference type="InterPro" id="IPR013805">
    <property type="entry name" value="GrpE_coiled_coil"/>
</dbReference>
<dbReference type="InterPro" id="IPR009012">
    <property type="entry name" value="GrpE_head"/>
</dbReference>
<dbReference type="NCBIfam" id="NF010758">
    <property type="entry name" value="PRK14161.1"/>
    <property type="match status" value="1"/>
</dbReference>
<dbReference type="PANTHER" id="PTHR21237">
    <property type="entry name" value="GRPE PROTEIN"/>
    <property type="match status" value="1"/>
</dbReference>
<dbReference type="PANTHER" id="PTHR21237:SF23">
    <property type="entry name" value="GRPE PROTEIN HOMOLOG, MITOCHONDRIAL"/>
    <property type="match status" value="1"/>
</dbReference>
<dbReference type="Pfam" id="PF01025">
    <property type="entry name" value="GrpE"/>
    <property type="match status" value="1"/>
</dbReference>
<dbReference type="PRINTS" id="PR00773">
    <property type="entry name" value="GRPEPROTEIN"/>
</dbReference>
<dbReference type="SUPFAM" id="SSF58014">
    <property type="entry name" value="Coiled-coil domain of nucleotide exchange factor GrpE"/>
    <property type="match status" value="1"/>
</dbReference>
<dbReference type="SUPFAM" id="SSF51064">
    <property type="entry name" value="Head domain of nucleotide exchange factor GrpE"/>
    <property type="match status" value="1"/>
</dbReference>
<dbReference type="PROSITE" id="PS01071">
    <property type="entry name" value="GRPE"/>
    <property type="match status" value="1"/>
</dbReference>
<comment type="function">
    <text evidence="1">Participates actively in the response to hyperosmotic and heat shock by preventing the aggregation of stress-denatured proteins, in association with DnaK and GrpE. It is the nucleotide exchange factor for DnaK and may function as a thermosensor. Unfolded proteins bind initially to DnaJ; upon interaction with the DnaJ-bound protein, DnaK hydrolyzes its bound ATP, resulting in the formation of a stable complex. GrpE releases ADP from DnaK; ATP binding to DnaK triggers the release of the substrate protein, thus completing the reaction cycle. Several rounds of ATP-dependent interactions between DnaJ, DnaK and GrpE are required for fully efficient folding.</text>
</comment>
<comment type="subunit">
    <text evidence="1">Homodimer.</text>
</comment>
<comment type="subcellular location">
    <subcellularLocation>
        <location evidence="1">Cytoplasm</location>
    </subcellularLocation>
</comment>
<comment type="similarity">
    <text evidence="1">Belongs to the GrpE family.</text>
</comment>
<protein>
    <recommendedName>
        <fullName evidence="1">Protein GrpE</fullName>
    </recommendedName>
    <alternativeName>
        <fullName evidence="1">HSP-70 cofactor</fullName>
    </alternativeName>
</protein>
<evidence type="ECO:0000255" key="1">
    <source>
        <dbReference type="HAMAP-Rule" id="MF_01151"/>
    </source>
</evidence>
<sequence>MIDDNIENNEQTINDIAEEIVETANPEVTALKAEIEELKDKLIRTTAEIDNTRKRLEKARDEAKDYAIATFAKELLNVSDNLSRALAHKPANSDVEVTNIIAGVQMTKDELDKVFHKHHIEEIKPEIGSMFDYNLHNAIAQIEHPDHAPNSIITLMQSGYKIRDRLLRPATVQVVKKP</sequence>
<reference key="1">
    <citation type="journal article" date="2009" name="PLoS ONE">
        <title>Genome sequence of the endosymbiont Rickettsia peacockii and comparison with virulent Rickettsia rickettsii: identification of virulence factors.</title>
        <authorList>
            <person name="Felsheim R.F."/>
            <person name="Kurtti T.J."/>
            <person name="Munderloh U.G."/>
        </authorList>
    </citation>
    <scope>NUCLEOTIDE SEQUENCE [LARGE SCALE GENOMIC DNA]</scope>
    <source>
        <strain>Rustic</strain>
    </source>
</reference>
<organism>
    <name type="scientific">Rickettsia peacockii (strain Rustic)</name>
    <dbReference type="NCBI Taxonomy" id="562019"/>
    <lineage>
        <taxon>Bacteria</taxon>
        <taxon>Pseudomonadati</taxon>
        <taxon>Pseudomonadota</taxon>
        <taxon>Alphaproteobacteria</taxon>
        <taxon>Rickettsiales</taxon>
        <taxon>Rickettsiaceae</taxon>
        <taxon>Rickettsieae</taxon>
        <taxon>Rickettsia</taxon>
        <taxon>spotted fever group</taxon>
    </lineage>
</organism>
<proteinExistence type="inferred from homology"/>
<feature type="chain" id="PRO_1000213676" description="Protein GrpE">
    <location>
        <begin position="1"/>
        <end position="178"/>
    </location>
</feature>